<name>AROC_BEUC1</name>
<comment type="function">
    <text evidence="1">Catalyzes the anti-1,4-elimination of the C-3 phosphate and the C-6 proR hydrogen from 5-enolpyruvylshikimate-3-phosphate (EPSP) to yield chorismate, which is the branch point compound that serves as the starting substrate for the three terminal pathways of aromatic amino acid biosynthesis. This reaction introduces a second double bond into the aromatic ring system.</text>
</comment>
<comment type="catalytic activity">
    <reaction evidence="1">
        <text>5-O-(1-carboxyvinyl)-3-phosphoshikimate = chorismate + phosphate</text>
        <dbReference type="Rhea" id="RHEA:21020"/>
        <dbReference type="ChEBI" id="CHEBI:29748"/>
        <dbReference type="ChEBI" id="CHEBI:43474"/>
        <dbReference type="ChEBI" id="CHEBI:57701"/>
        <dbReference type="EC" id="4.2.3.5"/>
    </reaction>
</comment>
<comment type="cofactor">
    <cofactor evidence="1">
        <name>FMNH2</name>
        <dbReference type="ChEBI" id="CHEBI:57618"/>
    </cofactor>
    <text evidence="1">Reduced FMN (FMNH(2)).</text>
</comment>
<comment type="pathway">
    <text evidence="1">Metabolic intermediate biosynthesis; chorismate biosynthesis; chorismate from D-erythrose 4-phosphate and phosphoenolpyruvate: step 7/7.</text>
</comment>
<comment type="subunit">
    <text evidence="1">Homotetramer.</text>
</comment>
<comment type="similarity">
    <text evidence="1">Belongs to the chorismate synthase family.</text>
</comment>
<protein>
    <recommendedName>
        <fullName evidence="1">Chorismate synthase</fullName>
        <shortName evidence="1">CS</shortName>
        <ecNumber evidence="1">4.2.3.5</ecNumber>
    </recommendedName>
    <alternativeName>
        <fullName evidence="1">5-enolpyruvylshikimate-3-phosphate phospholyase</fullName>
    </alternativeName>
</protein>
<feature type="chain" id="PRO_1000204945" description="Chorismate synthase">
    <location>
        <begin position="1"/>
        <end position="395"/>
    </location>
</feature>
<feature type="binding site" evidence="1">
    <location>
        <position position="40"/>
    </location>
    <ligand>
        <name>NADP(+)</name>
        <dbReference type="ChEBI" id="CHEBI:58349"/>
    </ligand>
</feature>
<feature type="binding site" evidence="1">
    <location>
        <position position="46"/>
    </location>
    <ligand>
        <name>NADP(+)</name>
        <dbReference type="ChEBI" id="CHEBI:58349"/>
    </ligand>
</feature>
<feature type="binding site" evidence="1">
    <location>
        <begin position="134"/>
        <end position="136"/>
    </location>
    <ligand>
        <name>FMN</name>
        <dbReference type="ChEBI" id="CHEBI:58210"/>
    </ligand>
</feature>
<feature type="binding site" evidence="1">
    <location>
        <begin position="256"/>
        <end position="257"/>
    </location>
    <ligand>
        <name>FMN</name>
        <dbReference type="ChEBI" id="CHEBI:58210"/>
    </ligand>
</feature>
<feature type="binding site" evidence="1">
    <location>
        <position position="301"/>
    </location>
    <ligand>
        <name>FMN</name>
        <dbReference type="ChEBI" id="CHEBI:58210"/>
    </ligand>
</feature>
<feature type="binding site" evidence="1">
    <location>
        <begin position="316"/>
        <end position="320"/>
    </location>
    <ligand>
        <name>FMN</name>
        <dbReference type="ChEBI" id="CHEBI:58210"/>
    </ligand>
</feature>
<feature type="binding site" evidence="1">
    <location>
        <position position="342"/>
    </location>
    <ligand>
        <name>FMN</name>
        <dbReference type="ChEBI" id="CHEBI:58210"/>
    </ligand>
</feature>
<evidence type="ECO:0000255" key="1">
    <source>
        <dbReference type="HAMAP-Rule" id="MF_00300"/>
    </source>
</evidence>
<dbReference type="EC" id="4.2.3.5" evidence="1"/>
<dbReference type="EMBL" id="CP001618">
    <property type="protein sequence ID" value="ACQ80274.1"/>
    <property type="molecule type" value="Genomic_DNA"/>
</dbReference>
<dbReference type="RefSeq" id="WP_015882514.1">
    <property type="nucleotide sequence ID" value="NC_012669.1"/>
</dbReference>
<dbReference type="SMR" id="C5C5T3"/>
<dbReference type="STRING" id="471853.Bcav_2019"/>
<dbReference type="KEGG" id="bcv:Bcav_2019"/>
<dbReference type="eggNOG" id="COG0082">
    <property type="taxonomic scope" value="Bacteria"/>
</dbReference>
<dbReference type="HOGENOM" id="CLU_034547_2_0_11"/>
<dbReference type="OrthoDB" id="9771806at2"/>
<dbReference type="UniPathway" id="UPA00053">
    <property type="reaction ID" value="UER00090"/>
</dbReference>
<dbReference type="Proteomes" id="UP000007962">
    <property type="component" value="Chromosome"/>
</dbReference>
<dbReference type="GO" id="GO:0005829">
    <property type="term" value="C:cytosol"/>
    <property type="evidence" value="ECO:0007669"/>
    <property type="project" value="TreeGrafter"/>
</dbReference>
<dbReference type="GO" id="GO:0004107">
    <property type="term" value="F:chorismate synthase activity"/>
    <property type="evidence" value="ECO:0007669"/>
    <property type="project" value="UniProtKB-UniRule"/>
</dbReference>
<dbReference type="GO" id="GO:0010181">
    <property type="term" value="F:FMN binding"/>
    <property type="evidence" value="ECO:0007669"/>
    <property type="project" value="TreeGrafter"/>
</dbReference>
<dbReference type="GO" id="GO:0008652">
    <property type="term" value="P:amino acid biosynthetic process"/>
    <property type="evidence" value="ECO:0007669"/>
    <property type="project" value="UniProtKB-KW"/>
</dbReference>
<dbReference type="GO" id="GO:0009073">
    <property type="term" value="P:aromatic amino acid family biosynthetic process"/>
    <property type="evidence" value="ECO:0007669"/>
    <property type="project" value="UniProtKB-KW"/>
</dbReference>
<dbReference type="GO" id="GO:0009423">
    <property type="term" value="P:chorismate biosynthetic process"/>
    <property type="evidence" value="ECO:0007669"/>
    <property type="project" value="UniProtKB-UniRule"/>
</dbReference>
<dbReference type="CDD" id="cd07304">
    <property type="entry name" value="Chorismate_synthase"/>
    <property type="match status" value="1"/>
</dbReference>
<dbReference type="FunFam" id="3.60.150.10:FF:000002">
    <property type="entry name" value="Chorismate synthase"/>
    <property type="match status" value="1"/>
</dbReference>
<dbReference type="Gene3D" id="3.60.150.10">
    <property type="entry name" value="Chorismate synthase AroC"/>
    <property type="match status" value="1"/>
</dbReference>
<dbReference type="HAMAP" id="MF_00300">
    <property type="entry name" value="Chorismate_synth"/>
    <property type="match status" value="1"/>
</dbReference>
<dbReference type="InterPro" id="IPR000453">
    <property type="entry name" value="Chorismate_synth"/>
</dbReference>
<dbReference type="InterPro" id="IPR035904">
    <property type="entry name" value="Chorismate_synth_AroC_sf"/>
</dbReference>
<dbReference type="InterPro" id="IPR020541">
    <property type="entry name" value="Chorismate_synthase_CS"/>
</dbReference>
<dbReference type="NCBIfam" id="TIGR00033">
    <property type="entry name" value="aroC"/>
    <property type="match status" value="1"/>
</dbReference>
<dbReference type="NCBIfam" id="NF003793">
    <property type="entry name" value="PRK05382.1"/>
    <property type="match status" value="1"/>
</dbReference>
<dbReference type="PANTHER" id="PTHR21085">
    <property type="entry name" value="CHORISMATE SYNTHASE"/>
    <property type="match status" value="1"/>
</dbReference>
<dbReference type="PANTHER" id="PTHR21085:SF0">
    <property type="entry name" value="CHORISMATE SYNTHASE"/>
    <property type="match status" value="1"/>
</dbReference>
<dbReference type="Pfam" id="PF01264">
    <property type="entry name" value="Chorismate_synt"/>
    <property type="match status" value="1"/>
</dbReference>
<dbReference type="PIRSF" id="PIRSF001456">
    <property type="entry name" value="Chorismate_synth"/>
    <property type="match status" value="1"/>
</dbReference>
<dbReference type="SUPFAM" id="SSF103263">
    <property type="entry name" value="Chorismate synthase, AroC"/>
    <property type="match status" value="1"/>
</dbReference>
<dbReference type="PROSITE" id="PS00787">
    <property type="entry name" value="CHORISMATE_SYNTHASE_1"/>
    <property type="match status" value="1"/>
</dbReference>
<dbReference type="PROSITE" id="PS00789">
    <property type="entry name" value="CHORISMATE_SYNTHASE_3"/>
    <property type="match status" value="1"/>
</dbReference>
<accession>C5C5T3</accession>
<proteinExistence type="inferred from homology"/>
<keyword id="KW-0028">Amino-acid biosynthesis</keyword>
<keyword id="KW-0057">Aromatic amino acid biosynthesis</keyword>
<keyword id="KW-0274">FAD</keyword>
<keyword id="KW-0285">Flavoprotein</keyword>
<keyword id="KW-0288">FMN</keyword>
<keyword id="KW-0456">Lyase</keyword>
<keyword id="KW-0521">NADP</keyword>
<keyword id="KW-1185">Reference proteome</keyword>
<reference key="1">
    <citation type="journal article" date="2009" name="Stand. Genomic Sci.">
        <title>Complete genome sequence of Beutenbergia cavernae type strain (HKI 0122).</title>
        <authorList>
            <person name="Land M."/>
            <person name="Pukall R."/>
            <person name="Abt B."/>
            <person name="Goker M."/>
            <person name="Rohde M."/>
            <person name="Glavina Del Rio T."/>
            <person name="Tice H."/>
            <person name="Copeland A."/>
            <person name="Cheng J.F."/>
            <person name="Lucas S."/>
            <person name="Chen F."/>
            <person name="Nolan M."/>
            <person name="Bruce D."/>
            <person name="Goodwin L."/>
            <person name="Pitluck S."/>
            <person name="Ivanova N."/>
            <person name="Mavromatis K."/>
            <person name="Ovchinnikova G."/>
            <person name="Pati A."/>
            <person name="Chen A."/>
            <person name="Palaniappan K."/>
            <person name="Hauser L."/>
            <person name="Chang Y.J."/>
            <person name="Jefferies C.C."/>
            <person name="Saunders E."/>
            <person name="Brettin T."/>
            <person name="Detter J.C."/>
            <person name="Han C."/>
            <person name="Chain P."/>
            <person name="Bristow J."/>
            <person name="Eisen J.A."/>
            <person name="Markowitz V."/>
            <person name="Hugenholtz P."/>
            <person name="Kyrpides N.C."/>
            <person name="Klenk H.P."/>
            <person name="Lapidus A."/>
        </authorList>
    </citation>
    <scope>NUCLEOTIDE SEQUENCE [LARGE SCALE GENOMIC DNA]</scope>
    <source>
        <strain>ATCC BAA-8 / DSM 12333 / CCUG 43141 / JCM 11478 / NBRC 16432 / NCIMB 13614 / HKI 0122</strain>
    </source>
</reference>
<sequence>MLRWLTAGESHGPALVAVLEGLPAGVEITTTQIGDALARRRLGYGRGARMSFERDEVRLLGGVRHGLTQGGPIAVEIGNTEWPKWETVMAADPVDPAALTGARGAPLTRPRPGHADLIGMTKYGFDEARPVLERASARETASRVALGRVAAAFLEQAAGVRLVSHVVAIGPVSAPDDADLPTPDDVAALDADPIRCFDAATSAAMVAEIDDAQKAGDTLGGVVEVLAYGLPPGLGSYVQSDRRLDGRLAGVLMGIQAIKGVEVGDGFRTAARRGSAAHDEIERATDGRVRRRTNRAGGVEGGMTNGEVLRVRAAMKPISTVPRALDTIDTATGDAAKAIHQRSDVCAVAPAAVVAEAMVALVLAQALLEKVGGDSVAESARNLTSYLEAIPEQQR</sequence>
<organism>
    <name type="scientific">Beutenbergia cavernae (strain ATCC BAA-8 / DSM 12333 / CCUG 43141 / JCM 11478 / NBRC 16432 / NCIMB 13614 / HKI 0122)</name>
    <dbReference type="NCBI Taxonomy" id="471853"/>
    <lineage>
        <taxon>Bacteria</taxon>
        <taxon>Bacillati</taxon>
        <taxon>Actinomycetota</taxon>
        <taxon>Actinomycetes</taxon>
        <taxon>Micrococcales</taxon>
        <taxon>Beutenbergiaceae</taxon>
        <taxon>Beutenbergia</taxon>
    </lineage>
</organism>
<gene>
    <name evidence="1" type="primary">aroC</name>
    <name type="ordered locus">Bcav_2019</name>
</gene>